<gene>
    <name type="primary">DDX28</name>
    <name type="synonym">MDDX28</name>
</gene>
<dbReference type="EC" id="3.6.4.13"/>
<dbReference type="EMBL" id="AF329821">
    <property type="protein sequence ID" value="AAG59833.1"/>
    <property type="molecule type" value="Genomic_DNA"/>
</dbReference>
<dbReference type="EMBL" id="AK002144">
    <property type="protein sequence ID" value="BAA92106.1"/>
    <property type="molecule type" value="mRNA"/>
</dbReference>
<dbReference type="EMBL" id="AC130462">
    <property type="status" value="NOT_ANNOTATED_CDS"/>
    <property type="molecule type" value="Genomic_DNA"/>
</dbReference>
<dbReference type="EMBL" id="BC024273">
    <property type="protein sequence ID" value="AAH24273.1"/>
    <property type="molecule type" value="mRNA"/>
</dbReference>
<dbReference type="CCDS" id="CCDS10858.1"/>
<dbReference type="RefSeq" id="NP_060850.2">
    <property type="nucleotide sequence ID" value="NM_018380.4"/>
</dbReference>
<dbReference type="PDB" id="7OI6">
    <property type="method" value="EM"/>
    <property type="resolution" value="5.70 A"/>
    <property type="chains" value="x=1-540"/>
</dbReference>
<dbReference type="PDBsum" id="7OI6"/>
<dbReference type="EMDB" id="EMD-12919"/>
<dbReference type="SMR" id="Q9NUL7"/>
<dbReference type="BioGRID" id="120907">
    <property type="interactions" value="275"/>
</dbReference>
<dbReference type="CORUM" id="Q9NUL7"/>
<dbReference type="FunCoup" id="Q9NUL7">
    <property type="interactions" value="1918"/>
</dbReference>
<dbReference type="IntAct" id="Q9NUL7">
    <property type="interactions" value="86"/>
</dbReference>
<dbReference type="MINT" id="Q9NUL7"/>
<dbReference type="STRING" id="9606.ENSP00000332340"/>
<dbReference type="GlyGen" id="Q9NUL7">
    <property type="glycosylation" value="1 site, 1 O-linked glycan (1 site)"/>
</dbReference>
<dbReference type="iPTMnet" id="Q9NUL7"/>
<dbReference type="PhosphoSitePlus" id="Q9NUL7"/>
<dbReference type="SwissPalm" id="Q9NUL7"/>
<dbReference type="BioMuta" id="DDX28"/>
<dbReference type="DMDM" id="296434476"/>
<dbReference type="jPOST" id="Q9NUL7"/>
<dbReference type="MassIVE" id="Q9NUL7"/>
<dbReference type="PaxDb" id="9606-ENSP00000332340"/>
<dbReference type="PeptideAtlas" id="Q9NUL7"/>
<dbReference type="ProteomicsDB" id="82692"/>
<dbReference type="Pumba" id="Q9NUL7"/>
<dbReference type="Antibodypedia" id="29712">
    <property type="antibodies" value="155 antibodies from 23 providers"/>
</dbReference>
<dbReference type="DNASU" id="55794"/>
<dbReference type="Ensembl" id="ENST00000332395.7">
    <property type="protein sequence ID" value="ENSP00000332340.6"/>
    <property type="gene ID" value="ENSG00000182810.7"/>
</dbReference>
<dbReference type="GeneID" id="55794"/>
<dbReference type="KEGG" id="hsa:55794"/>
<dbReference type="MANE-Select" id="ENST00000332395.7">
    <property type="protein sequence ID" value="ENSP00000332340.6"/>
    <property type="RefSeq nucleotide sequence ID" value="NM_018380.4"/>
    <property type="RefSeq protein sequence ID" value="NP_060850.2"/>
</dbReference>
<dbReference type="UCSC" id="uc002evh.3">
    <property type="organism name" value="human"/>
</dbReference>
<dbReference type="AGR" id="HGNC:17330"/>
<dbReference type="CTD" id="55794"/>
<dbReference type="DisGeNET" id="55794"/>
<dbReference type="GeneCards" id="DDX28"/>
<dbReference type="HGNC" id="HGNC:17330">
    <property type="gene designation" value="DDX28"/>
</dbReference>
<dbReference type="HPA" id="ENSG00000182810">
    <property type="expression patterns" value="Low tissue specificity"/>
</dbReference>
<dbReference type="MIM" id="607618">
    <property type="type" value="gene"/>
</dbReference>
<dbReference type="neXtProt" id="NX_Q9NUL7"/>
<dbReference type="OpenTargets" id="ENSG00000182810"/>
<dbReference type="PharmGKB" id="PA27214"/>
<dbReference type="VEuPathDB" id="HostDB:ENSG00000182810"/>
<dbReference type="eggNOG" id="KOG0330">
    <property type="taxonomic scope" value="Eukaryota"/>
</dbReference>
<dbReference type="GeneTree" id="ENSGT00940000161738"/>
<dbReference type="HOGENOM" id="CLU_003041_1_3_1"/>
<dbReference type="InParanoid" id="Q9NUL7"/>
<dbReference type="OMA" id="NGDMLMK"/>
<dbReference type="OrthoDB" id="10256233at2759"/>
<dbReference type="PAN-GO" id="Q9NUL7">
    <property type="GO annotations" value="2 GO annotations based on evolutionary models"/>
</dbReference>
<dbReference type="PhylomeDB" id="Q9NUL7"/>
<dbReference type="TreeFam" id="TF324977"/>
<dbReference type="PathwayCommons" id="Q9NUL7"/>
<dbReference type="SignaLink" id="Q9NUL7"/>
<dbReference type="SIGNOR" id="Q9NUL7"/>
<dbReference type="BioGRID-ORCS" id="55794">
    <property type="hits" value="223 hits in 1163 CRISPR screens"/>
</dbReference>
<dbReference type="CD-CODE" id="5965E019">
    <property type="entry name" value="mtRNA granule"/>
</dbReference>
<dbReference type="ChiTaRS" id="DDX28">
    <property type="organism name" value="human"/>
</dbReference>
<dbReference type="GenomeRNAi" id="55794"/>
<dbReference type="Pharos" id="Q9NUL7">
    <property type="development level" value="Tbio"/>
</dbReference>
<dbReference type="PRO" id="PR:Q9NUL7"/>
<dbReference type="Proteomes" id="UP000005640">
    <property type="component" value="Chromosome 16"/>
</dbReference>
<dbReference type="RNAct" id="Q9NUL7">
    <property type="molecule type" value="protein"/>
</dbReference>
<dbReference type="Bgee" id="ENSG00000182810">
    <property type="expression patterns" value="Expressed in oocyte and 167 other cell types or tissues"/>
</dbReference>
<dbReference type="GO" id="GO:0005829">
    <property type="term" value="C:cytosol"/>
    <property type="evidence" value="ECO:0000314"/>
    <property type="project" value="HPA"/>
</dbReference>
<dbReference type="GO" id="GO:0042645">
    <property type="term" value="C:mitochondrial nucleoid"/>
    <property type="evidence" value="ECO:0000314"/>
    <property type="project" value="UniProtKB"/>
</dbReference>
<dbReference type="GO" id="GO:0005739">
    <property type="term" value="C:mitochondrion"/>
    <property type="evidence" value="ECO:0000314"/>
    <property type="project" value="LIFEdb"/>
</dbReference>
<dbReference type="GO" id="GO:0005730">
    <property type="term" value="C:nucleolus"/>
    <property type="evidence" value="ECO:0000314"/>
    <property type="project" value="HPA"/>
</dbReference>
<dbReference type="GO" id="GO:0005654">
    <property type="term" value="C:nucleoplasm"/>
    <property type="evidence" value="ECO:0000314"/>
    <property type="project" value="HPA"/>
</dbReference>
<dbReference type="GO" id="GO:0035770">
    <property type="term" value="C:ribonucleoprotein granule"/>
    <property type="evidence" value="ECO:0000314"/>
    <property type="project" value="UniProtKB"/>
</dbReference>
<dbReference type="GO" id="GO:0005524">
    <property type="term" value="F:ATP binding"/>
    <property type="evidence" value="ECO:0007669"/>
    <property type="project" value="UniProtKB-KW"/>
</dbReference>
<dbReference type="GO" id="GO:0016887">
    <property type="term" value="F:ATP hydrolysis activity"/>
    <property type="evidence" value="ECO:0007669"/>
    <property type="project" value="RHEA"/>
</dbReference>
<dbReference type="GO" id="GO:0003723">
    <property type="term" value="F:RNA binding"/>
    <property type="evidence" value="ECO:0007005"/>
    <property type="project" value="UniProtKB"/>
</dbReference>
<dbReference type="GO" id="GO:0003724">
    <property type="term" value="F:RNA helicase activity"/>
    <property type="evidence" value="ECO:0007669"/>
    <property type="project" value="UniProtKB-EC"/>
</dbReference>
<dbReference type="GO" id="GO:0019843">
    <property type="term" value="F:rRNA binding"/>
    <property type="evidence" value="ECO:0000314"/>
    <property type="project" value="UniProtKB"/>
</dbReference>
<dbReference type="GO" id="GO:1902775">
    <property type="term" value="P:mitochondrial large ribosomal subunit assembly"/>
    <property type="evidence" value="ECO:0000315"/>
    <property type="project" value="UniProtKB"/>
</dbReference>
<dbReference type="CDD" id="cd17948">
    <property type="entry name" value="DEADc_DDX28"/>
    <property type="match status" value="1"/>
</dbReference>
<dbReference type="CDD" id="cd18787">
    <property type="entry name" value="SF2_C_DEAD"/>
    <property type="match status" value="1"/>
</dbReference>
<dbReference type="FunFam" id="3.40.50.300:FF:002415">
    <property type="entry name" value="Probable ATP-dependent RNA helicase DDX28"/>
    <property type="match status" value="1"/>
</dbReference>
<dbReference type="FunFam" id="3.40.50.300:FF:002529">
    <property type="entry name" value="Probable ATP-dependent RNA helicase DDX28"/>
    <property type="match status" value="1"/>
</dbReference>
<dbReference type="Gene3D" id="3.40.50.300">
    <property type="entry name" value="P-loop containing nucleotide triphosphate hydrolases"/>
    <property type="match status" value="2"/>
</dbReference>
<dbReference type="InterPro" id="IPR011545">
    <property type="entry name" value="DEAD/DEAH_box_helicase_dom"/>
</dbReference>
<dbReference type="InterPro" id="IPR050079">
    <property type="entry name" value="DEAD_box_RNA_helicase"/>
</dbReference>
<dbReference type="InterPro" id="IPR014001">
    <property type="entry name" value="Helicase_ATP-bd"/>
</dbReference>
<dbReference type="InterPro" id="IPR001650">
    <property type="entry name" value="Helicase_C-like"/>
</dbReference>
<dbReference type="InterPro" id="IPR027417">
    <property type="entry name" value="P-loop_NTPase"/>
</dbReference>
<dbReference type="InterPro" id="IPR014014">
    <property type="entry name" value="RNA_helicase_DEAD_Q_motif"/>
</dbReference>
<dbReference type="PANTHER" id="PTHR47959:SF1">
    <property type="entry name" value="ATP-DEPENDENT RNA HELICASE DBPA"/>
    <property type="match status" value="1"/>
</dbReference>
<dbReference type="PANTHER" id="PTHR47959">
    <property type="entry name" value="ATP-DEPENDENT RNA HELICASE RHLE-RELATED"/>
    <property type="match status" value="1"/>
</dbReference>
<dbReference type="Pfam" id="PF00270">
    <property type="entry name" value="DEAD"/>
    <property type="match status" value="1"/>
</dbReference>
<dbReference type="Pfam" id="PF00271">
    <property type="entry name" value="Helicase_C"/>
    <property type="match status" value="1"/>
</dbReference>
<dbReference type="SMART" id="SM00487">
    <property type="entry name" value="DEXDc"/>
    <property type="match status" value="1"/>
</dbReference>
<dbReference type="SMART" id="SM00490">
    <property type="entry name" value="HELICc"/>
    <property type="match status" value="1"/>
</dbReference>
<dbReference type="SUPFAM" id="SSF52540">
    <property type="entry name" value="P-loop containing nucleoside triphosphate hydrolases"/>
    <property type="match status" value="1"/>
</dbReference>
<dbReference type="PROSITE" id="PS51192">
    <property type="entry name" value="HELICASE_ATP_BIND_1"/>
    <property type="match status" value="1"/>
</dbReference>
<dbReference type="PROSITE" id="PS51194">
    <property type="entry name" value="HELICASE_CTER"/>
    <property type="match status" value="1"/>
</dbReference>
<dbReference type="PROSITE" id="PS51195">
    <property type="entry name" value="Q_MOTIF"/>
    <property type="match status" value="1"/>
</dbReference>
<proteinExistence type="evidence at protein level"/>
<reference key="1">
    <citation type="journal article" date="2001" name="J. Biol. Chem.">
        <title>Cloning and characterization of MDDX28, a putative dead-box helicase with mitochondrial and nuclear localization.</title>
        <authorList>
            <person name="Valgardsdottir R."/>
            <person name="Brede G."/>
            <person name="Eide L.G."/>
            <person name="Frengen E."/>
            <person name="Prydz H."/>
        </authorList>
    </citation>
    <scope>NUCLEOTIDE SEQUENCE [MRNA]</scope>
    <scope>SUBCELLULAR LOCATION</scope>
    <scope>FUNCTION</scope>
    <scope>TISSUE SPECIFICITY</scope>
    <scope>VARIANT ALA-4</scope>
    <source>
        <tissue>Testis</tissue>
    </source>
</reference>
<reference key="2">
    <citation type="journal article" date="2004" name="Nat. Genet.">
        <title>Complete sequencing and characterization of 21,243 full-length human cDNAs.</title>
        <authorList>
            <person name="Ota T."/>
            <person name="Suzuki Y."/>
            <person name="Nishikawa T."/>
            <person name="Otsuki T."/>
            <person name="Sugiyama T."/>
            <person name="Irie R."/>
            <person name="Wakamatsu A."/>
            <person name="Hayashi K."/>
            <person name="Sato H."/>
            <person name="Nagai K."/>
            <person name="Kimura K."/>
            <person name="Makita H."/>
            <person name="Sekine M."/>
            <person name="Obayashi M."/>
            <person name="Nishi T."/>
            <person name="Shibahara T."/>
            <person name="Tanaka T."/>
            <person name="Ishii S."/>
            <person name="Yamamoto J."/>
            <person name="Saito K."/>
            <person name="Kawai Y."/>
            <person name="Isono Y."/>
            <person name="Nakamura Y."/>
            <person name="Nagahari K."/>
            <person name="Murakami K."/>
            <person name="Yasuda T."/>
            <person name="Iwayanagi T."/>
            <person name="Wagatsuma M."/>
            <person name="Shiratori A."/>
            <person name="Sudo H."/>
            <person name="Hosoiri T."/>
            <person name="Kaku Y."/>
            <person name="Kodaira H."/>
            <person name="Kondo H."/>
            <person name="Sugawara M."/>
            <person name="Takahashi M."/>
            <person name="Kanda K."/>
            <person name="Yokoi T."/>
            <person name="Furuya T."/>
            <person name="Kikkawa E."/>
            <person name="Omura Y."/>
            <person name="Abe K."/>
            <person name="Kamihara K."/>
            <person name="Katsuta N."/>
            <person name="Sato K."/>
            <person name="Tanikawa M."/>
            <person name="Yamazaki M."/>
            <person name="Ninomiya K."/>
            <person name="Ishibashi T."/>
            <person name="Yamashita H."/>
            <person name="Murakawa K."/>
            <person name="Fujimori K."/>
            <person name="Tanai H."/>
            <person name="Kimata M."/>
            <person name="Watanabe M."/>
            <person name="Hiraoka S."/>
            <person name="Chiba Y."/>
            <person name="Ishida S."/>
            <person name="Ono Y."/>
            <person name="Takiguchi S."/>
            <person name="Watanabe S."/>
            <person name="Yosida M."/>
            <person name="Hotuta T."/>
            <person name="Kusano J."/>
            <person name="Kanehori K."/>
            <person name="Takahashi-Fujii A."/>
            <person name="Hara H."/>
            <person name="Tanase T.-O."/>
            <person name="Nomura Y."/>
            <person name="Togiya S."/>
            <person name="Komai F."/>
            <person name="Hara R."/>
            <person name="Takeuchi K."/>
            <person name="Arita M."/>
            <person name="Imose N."/>
            <person name="Musashino K."/>
            <person name="Yuuki H."/>
            <person name="Oshima A."/>
            <person name="Sasaki N."/>
            <person name="Aotsuka S."/>
            <person name="Yoshikawa Y."/>
            <person name="Matsunawa H."/>
            <person name="Ichihara T."/>
            <person name="Shiohata N."/>
            <person name="Sano S."/>
            <person name="Moriya S."/>
            <person name="Momiyama H."/>
            <person name="Satoh N."/>
            <person name="Takami S."/>
            <person name="Terashima Y."/>
            <person name="Suzuki O."/>
            <person name="Nakagawa S."/>
            <person name="Senoh A."/>
            <person name="Mizoguchi H."/>
            <person name="Goto Y."/>
            <person name="Shimizu F."/>
            <person name="Wakebe H."/>
            <person name="Hishigaki H."/>
            <person name="Watanabe T."/>
            <person name="Sugiyama A."/>
            <person name="Takemoto M."/>
            <person name="Kawakami B."/>
            <person name="Yamazaki M."/>
            <person name="Watanabe K."/>
            <person name="Kumagai A."/>
            <person name="Itakura S."/>
            <person name="Fukuzumi Y."/>
            <person name="Fujimori Y."/>
            <person name="Komiyama M."/>
            <person name="Tashiro H."/>
            <person name="Tanigami A."/>
            <person name="Fujiwara T."/>
            <person name="Ono T."/>
            <person name="Yamada K."/>
            <person name="Fujii Y."/>
            <person name="Ozaki K."/>
            <person name="Hirao M."/>
            <person name="Ohmori Y."/>
            <person name="Kawabata A."/>
            <person name="Hikiji T."/>
            <person name="Kobatake N."/>
            <person name="Inagaki H."/>
            <person name="Ikema Y."/>
            <person name="Okamoto S."/>
            <person name="Okitani R."/>
            <person name="Kawakami T."/>
            <person name="Noguchi S."/>
            <person name="Itoh T."/>
            <person name="Shigeta K."/>
            <person name="Senba T."/>
            <person name="Matsumura K."/>
            <person name="Nakajima Y."/>
            <person name="Mizuno T."/>
            <person name="Morinaga M."/>
            <person name="Sasaki M."/>
            <person name="Togashi T."/>
            <person name="Oyama M."/>
            <person name="Hata H."/>
            <person name="Watanabe M."/>
            <person name="Komatsu T."/>
            <person name="Mizushima-Sugano J."/>
            <person name="Satoh T."/>
            <person name="Shirai Y."/>
            <person name="Takahashi Y."/>
            <person name="Nakagawa K."/>
            <person name="Okumura K."/>
            <person name="Nagase T."/>
            <person name="Nomura N."/>
            <person name="Kikuchi H."/>
            <person name="Masuho Y."/>
            <person name="Yamashita R."/>
            <person name="Nakai K."/>
            <person name="Yada T."/>
            <person name="Nakamura Y."/>
            <person name="Ohara O."/>
            <person name="Isogai T."/>
            <person name="Sugano S."/>
        </authorList>
    </citation>
    <scope>NUCLEOTIDE SEQUENCE [LARGE SCALE MRNA]</scope>
    <scope>VARIANT ALA-4</scope>
    <source>
        <tissue>Placenta</tissue>
    </source>
</reference>
<reference key="3">
    <citation type="journal article" date="2004" name="Nature">
        <title>The sequence and analysis of duplication-rich human chromosome 16.</title>
        <authorList>
            <person name="Martin J."/>
            <person name="Han C."/>
            <person name="Gordon L.A."/>
            <person name="Terry A."/>
            <person name="Prabhakar S."/>
            <person name="She X."/>
            <person name="Xie G."/>
            <person name="Hellsten U."/>
            <person name="Chan Y.M."/>
            <person name="Altherr M."/>
            <person name="Couronne O."/>
            <person name="Aerts A."/>
            <person name="Bajorek E."/>
            <person name="Black S."/>
            <person name="Blumer H."/>
            <person name="Branscomb E."/>
            <person name="Brown N.C."/>
            <person name="Bruno W.J."/>
            <person name="Buckingham J.M."/>
            <person name="Callen D.F."/>
            <person name="Campbell C.S."/>
            <person name="Campbell M.L."/>
            <person name="Campbell E.W."/>
            <person name="Caoile C."/>
            <person name="Challacombe J.F."/>
            <person name="Chasteen L.A."/>
            <person name="Chertkov O."/>
            <person name="Chi H.C."/>
            <person name="Christensen M."/>
            <person name="Clark L.M."/>
            <person name="Cohn J.D."/>
            <person name="Denys M."/>
            <person name="Detter J.C."/>
            <person name="Dickson M."/>
            <person name="Dimitrijevic-Bussod M."/>
            <person name="Escobar J."/>
            <person name="Fawcett J.J."/>
            <person name="Flowers D."/>
            <person name="Fotopulos D."/>
            <person name="Glavina T."/>
            <person name="Gomez M."/>
            <person name="Gonzales E."/>
            <person name="Goodstein D."/>
            <person name="Goodwin L.A."/>
            <person name="Grady D.L."/>
            <person name="Grigoriev I."/>
            <person name="Groza M."/>
            <person name="Hammon N."/>
            <person name="Hawkins T."/>
            <person name="Haydu L."/>
            <person name="Hildebrand C.E."/>
            <person name="Huang W."/>
            <person name="Israni S."/>
            <person name="Jett J."/>
            <person name="Jewett P.B."/>
            <person name="Kadner K."/>
            <person name="Kimball H."/>
            <person name="Kobayashi A."/>
            <person name="Krawczyk M.-C."/>
            <person name="Leyba T."/>
            <person name="Longmire J.L."/>
            <person name="Lopez F."/>
            <person name="Lou Y."/>
            <person name="Lowry S."/>
            <person name="Ludeman T."/>
            <person name="Manohar C.F."/>
            <person name="Mark G.A."/>
            <person name="McMurray K.L."/>
            <person name="Meincke L.J."/>
            <person name="Morgan J."/>
            <person name="Moyzis R.K."/>
            <person name="Mundt M.O."/>
            <person name="Munk A.C."/>
            <person name="Nandkeshwar R.D."/>
            <person name="Pitluck S."/>
            <person name="Pollard M."/>
            <person name="Predki P."/>
            <person name="Parson-Quintana B."/>
            <person name="Ramirez L."/>
            <person name="Rash S."/>
            <person name="Retterer J."/>
            <person name="Ricke D.O."/>
            <person name="Robinson D.L."/>
            <person name="Rodriguez A."/>
            <person name="Salamov A."/>
            <person name="Saunders E.H."/>
            <person name="Scott D."/>
            <person name="Shough T."/>
            <person name="Stallings R.L."/>
            <person name="Stalvey M."/>
            <person name="Sutherland R.D."/>
            <person name="Tapia R."/>
            <person name="Tesmer J.G."/>
            <person name="Thayer N."/>
            <person name="Thompson L.S."/>
            <person name="Tice H."/>
            <person name="Torney D.C."/>
            <person name="Tran-Gyamfi M."/>
            <person name="Tsai M."/>
            <person name="Ulanovsky L.E."/>
            <person name="Ustaszewska A."/>
            <person name="Vo N."/>
            <person name="White P.S."/>
            <person name="Williams A.L."/>
            <person name="Wills P.L."/>
            <person name="Wu J.-R."/>
            <person name="Wu K."/>
            <person name="Yang J."/>
            <person name="DeJong P."/>
            <person name="Bruce D."/>
            <person name="Doggett N.A."/>
            <person name="Deaven L."/>
            <person name="Schmutz J."/>
            <person name="Grimwood J."/>
            <person name="Richardson P."/>
            <person name="Rokhsar D.S."/>
            <person name="Eichler E.E."/>
            <person name="Gilna P."/>
            <person name="Lucas S.M."/>
            <person name="Myers R.M."/>
            <person name="Rubin E.M."/>
            <person name="Pennacchio L.A."/>
        </authorList>
    </citation>
    <scope>NUCLEOTIDE SEQUENCE [LARGE SCALE GENOMIC DNA]</scope>
</reference>
<reference key="4">
    <citation type="journal article" date="2004" name="Genome Res.">
        <title>The status, quality, and expansion of the NIH full-length cDNA project: the Mammalian Gene Collection (MGC).</title>
        <authorList>
            <consortium name="The MGC Project Team"/>
        </authorList>
    </citation>
    <scope>NUCLEOTIDE SEQUENCE [LARGE SCALE MRNA]</scope>
    <scope>VARIANT ALA-4</scope>
    <source>
        <tissue>Brain</tissue>
    </source>
</reference>
<reference key="5">
    <citation type="journal article" date="2011" name="BMC Syst. Biol.">
        <title>Initial characterization of the human central proteome.</title>
        <authorList>
            <person name="Burkard T.R."/>
            <person name="Planyavsky M."/>
            <person name="Kaupe I."/>
            <person name="Breitwieser F.P."/>
            <person name="Buerckstuemmer T."/>
            <person name="Bennett K.L."/>
            <person name="Superti-Furga G."/>
            <person name="Colinge J."/>
        </authorList>
    </citation>
    <scope>IDENTIFICATION BY MASS SPECTROMETRY [LARGE SCALE ANALYSIS]</scope>
</reference>
<reference key="6">
    <citation type="journal article" date="2015" name="Cell Rep.">
        <title>The human mitochondrial DEAD-box protein DDX28 resides in RNA granules and functions in mitoribosome assembly.</title>
        <authorList>
            <person name="Tu Y.T."/>
            <person name="Barrientos A."/>
        </authorList>
    </citation>
    <scope>FUNCTION</scope>
    <scope>SUBUNIT</scope>
    <scope>SUBCELLULAR LOCATION</scope>
    <scope>RNA-BINDING</scope>
    <scope>ASSOCIATION WITH MITOCHONDRIAL RIBOSOME LARGE SUBUNIT</scope>
    <scope>IDENTIFICATION BY MASS SPECTROMETRY</scope>
</reference>
<reference key="7">
    <citation type="journal article" date="2015" name="Cell Rep.">
        <title>Mitochondrial RNA granules are centers for post-transcriptional RNA processing and ribosome biogenesis.</title>
        <authorList>
            <person name="Antonicka H."/>
            <person name="Shoubridge E.A."/>
        </authorList>
    </citation>
    <scope>FUNCTION</scope>
    <scope>IDENTIFICATION IN A COMPLEX WITH GRSF1; DDX30; FASTKD2 AND FASTKD5</scope>
    <scope>SUBCELLULAR LOCATION</scope>
    <scope>RNA-BINDING</scope>
    <scope>IDENTIFICATION BY MASS SPECTROMETRY</scope>
</reference>
<evidence type="ECO:0000255" key="1"/>
<evidence type="ECO:0000255" key="2">
    <source>
        <dbReference type="PROSITE-ProRule" id="PRU00541"/>
    </source>
</evidence>
<evidence type="ECO:0000255" key="3">
    <source>
        <dbReference type="PROSITE-ProRule" id="PRU00542"/>
    </source>
</evidence>
<evidence type="ECO:0000269" key="4">
    <source>
    </source>
</evidence>
<evidence type="ECO:0000269" key="5">
    <source>
    </source>
</evidence>
<evidence type="ECO:0000269" key="6">
    <source>
    </source>
</evidence>
<evidence type="ECO:0000269" key="7">
    <source>
    </source>
</evidence>
<evidence type="ECO:0000269" key="8">
    <source>
    </source>
</evidence>
<evidence type="ECO:0000305" key="9"/>
<accession>Q9NUL7</accession>
<keyword id="KW-0002">3D-structure</keyword>
<keyword id="KW-0067">ATP-binding</keyword>
<keyword id="KW-0347">Helicase</keyword>
<keyword id="KW-0378">Hydrolase</keyword>
<keyword id="KW-0496">Mitochondrion</keyword>
<keyword id="KW-1135">Mitochondrion nucleoid</keyword>
<keyword id="KW-0547">Nucleotide-binding</keyword>
<keyword id="KW-0539">Nucleus</keyword>
<keyword id="KW-1267">Proteomics identification</keyword>
<keyword id="KW-1185">Reference proteome</keyword>
<keyword id="KW-0690">Ribosome biogenesis</keyword>
<keyword id="KW-0694">RNA-binding</keyword>
<keyword id="KW-0699">rRNA-binding</keyword>
<sequence>MALTRPVRLFSLVTRLLLAPRRGLTVRSPDEPLPVVRIPVALQRQLEQRQSRRRNLPRPVLVRPGPLLVSARRPELNQPARLTLGRWERAPLASQGWKSRRARRDHFSIERAQQEAPAVRKLSSKGSFADLGLEPRVLHALQEAAPEVVQPTTVQSSTIPSLLRGRHVVCAAETGSGKTLSYLLPLLQRLLGQPSLDSLPIPAPRGLVLVPSRELAQQVRAVAQPLGRSLGLLVRDLEGGHGMRRIRLQLSRQPSADVLVATPGALWKALKSRLISLEQLSFLVLDEADTLLDESFLELVDYILEKSHIAEGPADLEDPFNPKAQLVLVGATFPEGVGQLLNKVASPDAVTTITSSKLHCIMPHVKQTFLRLKGADKVAELVHILKHRDRAERTGPSGTVLVFCNSSSTVNWLGYILDDHKIQHLRLQGQMPALMRVGIFQSFQKSSRDILLCTDIASRGLDSTGVELVVNYDFPPTLQDYIHRAGRVGRVGSEVPGTVISFVTHPWDVSLVQKIELAARRRRSLPGLASSVKEPLPQAT</sequence>
<protein>
    <recommendedName>
        <fullName>Probable ATP-dependent RNA helicase DDX28</fullName>
        <ecNumber>3.6.4.13</ecNumber>
    </recommendedName>
    <alternativeName>
        <fullName>Mitochondrial DEAD box protein 28</fullName>
    </alternativeName>
</protein>
<name>DDX28_HUMAN</name>
<feature type="chain" id="PRO_0000055033" description="Probable ATP-dependent RNA helicase DDX28">
    <location>
        <begin position="1"/>
        <end position="540"/>
    </location>
</feature>
<feature type="domain" description="Helicase ATP-binding" evidence="2">
    <location>
        <begin position="159"/>
        <end position="351"/>
    </location>
</feature>
<feature type="domain" description="Helicase C-terminal" evidence="3">
    <location>
        <begin position="377"/>
        <end position="536"/>
    </location>
</feature>
<feature type="short sequence motif" description="Mitochondrial targeting signal" evidence="1">
    <location>
        <begin position="3"/>
        <end position="18"/>
    </location>
</feature>
<feature type="short sequence motif" description="Q motif">
    <location>
        <begin position="126"/>
        <end position="156"/>
    </location>
</feature>
<feature type="short sequence motif" description="Nuclear export signal" evidence="1">
    <location>
        <begin position="180"/>
        <end position="191"/>
    </location>
</feature>
<feature type="short sequence motif" description="DEAD">
    <location>
        <begin position="286"/>
        <end position="289"/>
    </location>
</feature>
<feature type="short sequence motif" description="Nuclear localization signal" evidence="1">
    <location>
        <begin position="520"/>
        <end position="523"/>
    </location>
</feature>
<feature type="binding site" evidence="2">
    <location>
        <begin position="172"/>
        <end position="179"/>
    </location>
    <ligand>
        <name>ATP</name>
        <dbReference type="ChEBI" id="CHEBI:30616"/>
    </ligand>
</feature>
<feature type="sequence variant" id="VAR_052163" description="In dbSNP:rs237831." evidence="4 5 6">
    <original>T</original>
    <variation>A</variation>
    <location>
        <position position="4"/>
    </location>
</feature>
<comment type="function">
    <text evidence="4 7 8">Plays an essential role in facilitating the proper assembly of the mitochondrial large ribosomal subunit and its helicase activity is essential for this function (PubMed:25683708, PubMed:25683715). May be involved in RNA processing or transport. Has RNA and Mg(2+)-dependent ATPase activity (PubMed:11350955).</text>
</comment>
<comment type="catalytic activity">
    <reaction>
        <text>ATP + H2O = ADP + phosphate + H(+)</text>
        <dbReference type="Rhea" id="RHEA:13065"/>
        <dbReference type="ChEBI" id="CHEBI:15377"/>
        <dbReference type="ChEBI" id="CHEBI:15378"/>
        <dbReference type="ChEBI" id="CHEBI:30616"/>
        <dbReference type="ChEBI" id="CHEBI:43474"/>
        <dbReference type="ChEBI" id="CHEBI:456216"/>
        <dbReference type="EC" id="3.6.4.13"/>
    </reaction>
</comment>
<comment type="subunit">
    <text evidence="7 8">Monomer. Found in a complex with GRSF1, DHX30, FASTKD2 and FASTKD5. Associates with the 16S mitochondrial rRNA (16S mt-rRNA) and with the mitochondrial ribosome large subunit (39S).</text>
</comment>
<comment type="subcellular location">
    <subcellularLocation>
        <location evidence="4 7">Nucleus</location>
    </subcellularLocation>
    <subcellularLocation>
        <location evidence="4">Mitochondrion</location>
    </subcellularLocation>
    <subcellularLocation>
        <location evidence="8">Mitochondrion matrix</location>
        <location evidence="8">Mitochondrion nucleoid</location>
    </subcellularLocation>
    <subcellularLocation>
        <location evidence="7">Mitochondrion matrix</location>
    </subcellularLocation>
    <text evidence="7 8">Transported between these two compartments. Nuclear localization depends on active RNA polymerase II transcription. Localizes to mitochondrial RNA granules found in close proximity to the mitochondrial nucleoids.</text>
</comment>
<comment type="tissue specificity">
    <text evidence="4">Expressed in all tissues tested, including brain, placenta, lung, liver, skeletal muscle, kidney, pancreas, leukocytes, colon, small intestine, ovary and prostate.</text>
</comment>
<comment type="similarity">
    <text evidence="9">Belongs to the DEAD box helicase family.</text>
</comment>
<organism>
    <name type="scientific">Homo sapiens</name>
    <name type="common">Human</name>
    <dbReference type="NCBI Taxonomy" id="9606"/>
    <lineage>
        <taxon>Eukaryota</taxon>
        <taxon>Metazoa</taxon>
        <taxon>Chordata</taxon>
        <taxon>Craniata</taxon>
        <taxon>Vertebrata</taxon>
        <taxon>Euteleostomi</taxon>
        <taxon>Mammalia</taxon>
        <taxon>Eutheria</taxon>
        <taxon>Euarchontoglires</taxon>
        <taxon>Primates</taxon>
        <taxon>Haplorrhini</taxon>
        <taxon>Catarrhini</taxon>
        <taxon>Hominidae</taxon>
        <taxon>Homo</taxon>
    </lineage>
</organism>